<evidence type="ECO:0000255" key="1">
    <source>
        <dbReference type="HAMAP-Rule" id="MF_00212"/>
    </source>
</evidence>
<sequence length="500" mass="53645">MTFSQKTDTDVLLIGAGIMSATLGTLLHALEPSLRLTMLERLDDCGLESSMGWNNAGTGHAANCELNYTPQRADGSVDISKALQVNTQFDISRELWSHLVTTGAIPDPRAFLHPCPHMSFVWGEENVAFLKARHAAMAAHHCYHGMDYSEDPAQIAQWAPLVMEGRDPAQKIAATRIITGTDVDYGALTHLLVGHLKTAGLDLRYNSEVIAIDRGDDGIWTVTFEDTVDGTRQQITAGFVFIGAGGAAIELLQKSGIPEAKGYAGFPVSGIWLRCDVDAVAARHHAKVYGKAASGSPPMSVPHLDTRVIGGKTSLLFGPYAGFSTKFLKRGSLTDLFGSITASNILPLLDVAKDNAALEEYLIGQVFQSRHHQFEMLRQFFPQARRADWQEAVAGQRVQIIKPDQGDPGGQLEFGTELVAASDKSLVALLGASPGASTAAAIAVHVLQTCFADRLTEDGWLPALRGALPSYGIDLITDAEACSASRKATAKVLKIDNIDA</sequence>
<name>MQO_AZOC5</name>
<comment type="catalytic activity">
    <reaction evidence="1">
        <text>(S)-malate + a quinone = a quinol + oxaloacetate</text>
        <dbReference type="Rhea" id="RHEA:46012"/>
        <dbReference type="ChEBI" id="CHEBI:15589"/>
        <dbReference type="ChEBI" id="CHEBI:16452"/>
        <dbReference type="ChEBI" id="CHEBI:24646"/>
        <dbReference type="ChEBI" id="CHEBI:132124"/>
        <dbReference type="EC" id="1.1.5.4"/>
    </reaction>
</comment>
<comment type="cofactor">
    <cofactor evidence="1">
        <name>FAD</name>
        <dbReference type="ChEBI" id="CHEBI:57692"/>
    </cofactor>
</comment>
<comment type="pathway">
    <text evidence="1">Carbohydrate metabolism; tricarboxylic acid cycle; oxaloacetate from (S)-malate (quinone route): step 1/1.</text>
</comment>
<comment type="similarity">
    <text evidence="1">Belongs to the MQO family.</text>
</comment>
<accession>A8I2M2</accession>
<dbReference type="EC" id="1.1.5.4" evidence="1"/>
<dbReference type="EMBL" id="AP009384">
    <property type="protein sequence ID" value="BAF87897.1"/>
    <property type="molecule type" value="Genomic_DNA"/>
</dbReference>
<dbReference type="RefSeq" id="WP_012170427.1">
    <property type="nucleotide sequence ID" value="NC_009937.1"/>
</dbReference>
<dbReference type="SMR" id="A8I2M2"/>
<dbReference type="STRING" id="438753.AZC_1899"/>
<dbReference type="KEGG" id="azc:AZC_1899"/>
<dbReference type="eggNOG" id="COG0579">
    <property type="taxonomic scope" value="Bacteria"/>
</dbReference>
<dbReference type="HOGENOM" id="CLU_028151_0_0_5"/>
<dbReference type="UniPathway" id="UPA00223">
    <property type="reaction ID" value="UER01008"/>
</dbReference>
<dbReference type="Proteomes" id="UP000000270">
    <property type="component" value="Chromosome"/>
</dbReference>
<dbReference type="GO" id="GO:0047545">
    <property type="term" value="F:2-hydroxyglutarate dehydrogenase activity"/>
    <property type="evidence" value="ECO:0007669"/>
    <property type="project" value="TreeGrafter"/>
</dbReference>
<dbReference type="GO" id="GO:0008924">
    <property type="term" value="F:L-malate dehydrogenase (quinone) activity"/>
    <property type="evidence" value="ECO:0007669"/>
    <property type="project" value="UniProtKB-UniRule"/>
</dbReference>
<dbReference type="GO" id="GO:0006099">
    <property type="term" value="P:tricarboxylic acid cycle"/>
    <property type="evidence" value="ECO:0007669"/>
    <property type="project" value="UniProtKB-UniRule"/>
</dbReference>
<dbReference type="Gene3D" id="3.30.9.10">
    <property type="entry name" value="D-Amino Acid Oxidase, subunit A, domain 2"/>
    <property type="match status" value="1"/>
</dbReference>
<dbReference type="Gene3D" id="3.50.50.60">
    <property type="entry name" value="FAD/NAD(P)-binding domain"/>
    <property type="match status" value="1"/>
</dbReference>
<dbReference type="HAMAP" id="MF_00212">
    <property type="entry name" value="MQO"/>
    <property type="match status" value="1"/>
</dbReference>
<dbReference type="InterPro" id="IPR036188">
    <property type="entry name" value="FAD/NAD-bd_sf"/>
</dbReference>
<dbReference type="InterPro" id="IPR006231">
    <property type="entry name" value="MQO"/>
</dbReference>
<dbReference type="NCBIfam" id="TIGR01320">
    <property type="entry name" value="mal_quin_oxido"/>
    <property type="match status" value="1"/>
</dbReference>
<dbReference type="NCBIfam" id="NF003603">
    <property type="entry name" value="PRK05257.1-1"/>
    <property type="match status" value="1"/>
</dbReference>
<dbReference type="NCBIfam" id="NF003605">
    <property type="entry name" value="PRK05257.1-4"/>
    <property type="match status" value="1"/>
</dbReference>
<dbReference type="NCBIfam" id="NF003606">
    <property type="entry name" value="PRK05257.2-1"/>
    <property type="match status" value="1"/>
</dbReference>
<dbReference type="NCBIfam" id="NF003608">
    <property type="entry name" value="PRK05257.2-4"/>
    <property type="match status" value="1"/>
</dbReference>
<dbReference type="NCBIfam" id="NF003611">
    <property type="entry name" value="PRK05257.3-2"/>
    <property type="match status" value="1"/>
</dbReference>
<dbReference type="NCBIfam" id="NF009875">
    <property type="entry name" value="PRK13339.1"/>
    <property type="match status" value="1"/>
</dbReference>
<dbReference type="PANTHER" id="PTHR43104">
    <property type="entry name" value="L-2-HYDROXYGLUTARATE DEHYDROGENASE, MITOCHONDRIAL"/>
    <property type="match status" value="1"/>
</dbReference>
<dbReference type="PANTHER" id="PTHR43104:SF2">
    <property type="entry name" value="L-2-HYDROXYGLUTARATE DEHYDROGENASE, MITOCHONDRIAL"/>
    <property type="match status" value="1"/>
</dbReference>
<dbReference type="Pfam" id="PF06039">
    <property type="entry name" value="Mqo"/>
    <property type="match status" value="1"/>
</dbReference>
<dbReference type="SUPFAM" id="SSF51905">
    <property type="entry name" value="FAD/NAD(P)-binding domain"/>
    <property type="match status" value="1"/>
</dbReference>
<protein>
    <recommendedName>
        <fullName evidence="1">Probable malate:quinone oxidoreductase</fullName>
        <ecNumber evidence="1">1.1.5.4</ecNumber>
    </recommendedName>
    <alternativeName>
        <fullName evidence="1">MQO</fullName>
    </alternativeName>
    <alternativeName>
        <fullName evidence="1">Malate dehydrogenase [quinone]</fullName>
    </alternativeName>
</protein>
<proteinExistence type="inferred from homology"/>
<keyword id="KW-0274">FAD</keyword>
<keyword id="KW-0285">Flavoprotein</keyword>
<keyword id="KW-0560">Oxidoreductase</keyword>
<keyword id="KW-1185">Reference proteome</keyword>
<keyword id="KW-0816">Tricarboxylic acid cycle</keyword>
<feature type="chain" id="PRO_1000071747" description="Probable malate:quinone oxidoreductase">
    <location>
        <begin position="1"/>
        <end position="500"/>
    </location>
</feature>
<gene>
    <name evidence="1" type="primary">mqo</name>
    <name type="ordered locus">AZC_1899</name>
</gene>
<organism>
    <name type="scientific">Azorhizobium caulinodans (strain ATCC 43989 / DSM 5975 / JCM 20966 / LMG 6465 / NBRC 14845 / NCIMB 13405 / ORS 571)</name>
    <dbReference type="NCBI Taxonomy" id="438753"/>
    <lineage>
        <taxon>Bacteria</taxon>
        <taxon>Pseudomonadati</taxon>
        <taxon>Pseudomonadota</taxon>
        <taxon>Alphaproteobacteria</taxon>
        <taxon>Hyphomicrobiales</taxon>
        <taxon>Xanthobacteraceae</taxon>
        <taxon>Azorhizobium</taxon>
    </lineage>
</organism>
<reference key="1">
    <citation type="submission" date="2007-04" db="EMBL/GenBank/DDBJ databases">
        <title>Complete genome sequence of the nitrogen-fixing bacterium Azorhizobium caulinodans ORS571.</title>
        <authorList>
            <person name="Lee K.B."/>
            <person name="Backer P.D."/>
            <person name="Aono T."/>
            <person name="Liu C.T."/>
            <person name="Suzuki S."/>
            <person name="Suzuki T."/>
            <person name="Kaneko T."/>
            <person name="Yamada M."/>
            <person name="Tabata S."/>
            <person name="Kupfer D.M."/>
            <person name="Najar F.Z."/>
            <person name="Wiley G.B."/>
            <person name="Roe B."/>
            <person name="Binnewies T."/>
            <person name="Ussery D."/>
            <person name="Vereecke D."/>
            <person name="Gevers D."/>
            <person name="Holsters M."/>
            <person name="Oyaizu H."/>
        </authorList>
    </citation>
    <scope>NUCLEOTIDE SEQUENCE [LARGE SCALE GENOMIC DNA]</scope>
    <source>
        <strain>ATCC 43989 / DSM 5975 / JCM 20966 / LMG 6465 / NBRC 14845 / NCIMB 13405 / ORS 571</strain>
    </source>
</reference>